<gene>
    <name type="primary">Stmnd1</name>
    <name type="synonym">Gm1574</name>
</gene>
<accession>Q6P3A1</accession>
<protein>
    <recommendedName>
        <fullName>Stathmin domain-containing protein 1</fullName>
    </recommendedName>
</protein>
<feature type="initiator methionine" description="Removed" evidence="1">
    <location>
        <position position="1"/>
    </location>
</feature>
<feature type="chain" id="PRO_0000421694" description="Stathmin domain-containing protein 1">
    <location>
        <begin position="2"/>
        <end position="279"/>
    </location>
</feature>
<feature type="domain" description="SLD" evidence="2">
    <location>
        <begin position="121"/>
        <end position="248"/>
    </location>
</feature>
<feature type="region of interest" description="Disordered" evidence="3">
    <location>
        <begin position="1"/>
        <end position="110"/>
    </location>
</feature>
<feature type="region of interest" description="Disordered" evidence="3">
    <location>
        <begin position="178"/>
        <end position="254"/>
    </location>
</feature>
<feature type="compositionally biased region" description="Basic and acidic residues" evidence="3">
    <location>
        <begin position="22"/>
        <end position="32"/>
    </location>
</feature>
<feature type="compositionally biased region" description="Polar residues" evidence="3">
    <location>
        <begin position="34"/>
        <end position="45"/>
    </location>
</feature>
<feature type="compositionally biased region" description="Basic and acidic residues" evidence="3">
    <location>
        <begin position="178"/>
        <end position="191"/>
    </location>
</feature>
<feature type="compositionally biased region" description="Basic and acidic residues" evidence="3">
    <location>
        <begin position="232"/>
        <end position="242"/>
    </location>
</feature>
<feature type="lipid moiety-binding region" description="N-myristoyl glycine" evidence="1">
    <location>
        <position position="2"/>
    </location>
</feature>
<organism>
    <name type="scientific">Mus musculus</name>
    <name type="common">Mouse</name>
    <dbReference type="NCBI Taxonomy" id="10090"/>
    <lineage>
        <taxon>Eukaryota</taxon>
        <taxon>Metazoa</taxon>
        <taxon>Chordata</taxon>
        <taxon>Craniata</taxon>
        <taxon>Vertebrata</taxon>
        <taxon>Euteleostomi</taxon>
        <taxon>Mammalia</taxon>
        <taxon>Eutheria</taxon>
        <taxon>Euarchontoglires</taxon>
        <taxon>Glires</taxon>
        <taxon>Rodentia</taxon>
        <taxon>Myomorpha</taxon>
        <taxon>Muroidea</taxon>
        <taxon>Muridae</taxon>
        <taxon>Murinae</taxon>
        <taxon>Mus</taxon>
        <taxon>Mus</taxon>
    </lineage>
</organism>
<proteinExistence type="evidence at transcript level"/>
<sequence>MGCGPSQQKEDQSQSRIPSPRKGWEEGSKADVRVTSSKENCSPQTEAAWPKHTIDNAKSLDQQAQIGSLPGTIPENSPTPSKTSRRINSDPVANGLTNKPQLPESWERPKSSDILEELIVQGIIQSRSKVFRNGESYDVMVDTTEKPLRKPPARLKKLKVKKEVKDFTIQDIEEKMQAAEERRKTKKEEIRKRLRSDRLLPTANPSDEAEPPGRVEVPFTKGLPAVNTPALEKSDVQEGEPLKRKKSESDVAQMNRNYSCTGLELVESDMYYNQEDNIF</sequence>
<evidence type="ECO:0000255" key="1"/>
<evidence type="ECO:0000255" key="2">
    <source>
        <dbReference type="PROSITE-ProRule" id="PRU00998"/>
    </source>
</evidence>
<evidence type="ECO:0000256" key="3">
    <source>
        <dbReference type="SAM" id="MobiDB-lite"/>
    </source>
</evidence>
<dbReference type="EMBL" id="AC153645">
    <property type="status" value="NOT_ANNOTATED_CDS"/>
    <property type="molecule type" value="Genomic_DNA"/>
</dbReference>
<dbReference type="EMBL" id="BC064117">
    <property type="protein sequence ID" value="AAH64117.1"/>
    <property type="molecule type" value="mRNA"/>
</dbReference>
<dbReference type="CCDS" id="CCDS36650.1"/>
<dbReference type="RefSeq" id="NP_001005422.1">
    <property type="nucleotide sequence ID" value="NM_001005422.1"/>
</dbReference>
<dbReference type="SMR" id="Q6P3A1"/>
<dbReference type="BioGRID" id="237672">
    <property type="interactions" value="3"/>
</dbReference>
<dbReference type="FunCoup" id="Q6P3A1">
    <property type="interactions" value="45"/>
</dbReference>
<dbReference type="STRING" id="10090.ENSMUSP00000075923"/>
<dbReference type="GlyGen" id="Q6P3A1">
    <property type="glycosylation" value="1 site"/>
</dbReference>
<dbReference type="PhosphoSitePlus" id="Q6P3A1"/>
<dbReference type="PaxDb" id="10090-ENSMUSP00000075923"/>
<dbReference type="ProteomicsDB" id="258764"/>
<dbReference type="Antibodypedia" id="77399">
    <property type="antibodies" value="4 antibodies from 4 providers"/>
</dbReference>
<dbReference type="Ensembl" id="ENSMUST00000076622.4">
    <property type="protein sequence ID" value="ENSMUSP00000075923.4"/>
    <property type="gene ID" value="ENSMUSG00000063529.4"/>
</dbReference>
<dbReference type="GeneID" id="380842"/>
<dbReference type="KEGG" id="mmu:380842"/>
<dbReference type="UCSC" id="uc007qhd.1">
    <property type="organism name" value="mouse"/>
</dbReference>
<dbReference type="AGR" id="MGI:2686420"/>
<dbReference type="CTD" id="401236"/>
<dbReference type="MGI" id="MGI:2686420">
    <property type="gene designation" value="Stmnd1"/>
</dbReference>
<dbReference type="VEuPathDB" id="HostDB:ENSMUSG00000063529"/>
<dbReference type="eggNOG" id="ENOG502S3US">
    <property type="taxonomic scope" value="Eukaryota"/>
</dbReference>
<dbReference type="GeneTree" id="ENSGT01030000234597"/>
<dbReference type="HOGENOM" id="CLU_089666_0_0_1"/>
<dbReference type="InParanoid" id="Q6P3A1"/>
<dbReference type="OMA" id="APKKGWE"/>
<dbReference type="OrthoDB" id="9940536at2759"/>
<dbReference type="PhylomeDB" id="Q6P3A1"/>
<dbReference type="TreeFam" id="TF333434"/>
<dbReference type="BioGRID-ORCS" id="380842">
    <property type="hits" value="3 hits in 77 CRISPR screens"/>
</dbReference>
<dbReference type="PRO" id="PR:Q6P3A1"/>
<dbReference type="Proteomes" id="UP000000589">
    <property type="component" value="Chromosome 13"/>
</dbReference>
<dbReference type="RNAct" id="Q6P3A1">
    <property type="molecule type" value="protein"/>
</dbReference>
<dbReference type="Bgee" id="ENSMUSG00000063529">
    <property type="expression patterns" value="Expressed in olfactory epithelium and 43 other cell types or tissues"/>
</dbReference>
<dbReference type="GO" id="GO:0031110">
    <property type="term" value="P:regulation of microtubule polymerization or depolymerization"/>
    <property type="evidence" value="ECO:0007669"/>
    <property type="project" value="InterPro"/>
</dbReference>
<dbReference type="InterPro" id="IPR000956">
    <property type="entry name" value="Stathmin_fam"/>
</dbReference>
<dbReference type="InterPro" id="IPR036002">
    <property type="entry name" value="Stathmin_sf"/>
</dbReference>
<dbReference type="PANTHER" id="PTHR10104">
    <property type="entry name" value="STATHMIN"/>
    <property type="match status" value="1"/>
</dbReference>
<dbReference type="PANTHER" id="PTHR10104:SF20">
    <property type="entry name" value="STATHMIN DOMAIN-CONTAINING PROTEIN 1"/>
    <property type="match status" value="1"/>
</dbReference>
<dbReference type="Pfam" id="PF00836">
    <property type="entry name" value="Stathmin"/>
    <property type="match status" value="1"/>
</dbReference>
<dbReference type="SUPFAM" id="SSF101494">
    <property type="entry name" value="Stathmin"/>
    <property type="match status" value="1"/>
</dbReference>
<dbReference type="PROSITE" id="PS51663">
    <property type="entry name" value="STATHMIN_3"/>
    <property type="match status" value="1"/>
</dbReference>
<reference key="1">
    <citation type="journal article" date="2009" name="PLoS Biol.">
        <title>Lineage-specific biology revealed by a finished genome assembly of the mouse.</title>
        <authorList>
            <person name="Church D.M."/>
            <person name="Goodstadt L."/>
            <person name="Hillier L.W."/>
            <person name="Zody M.C."/>
            <person name="Goldstein S."/>
            <person name="She X."/>
            <person name="Bult C.J."/>
            <person name="Agarwala R."/>
            <person name="Cherry J.L."/>
            <person name="DiCuccio M."/>
            <person name="Hlavina W."/>
            <person name="Kapustin Y."/>
            <person name="Meric P."/>
            <person name="Maglott D."/>
            <person name="Birtle Z."/>
            <person name="Marques A.C."/>
            <person name="Graves T."/>
            <person name="Zhou S."/>
            <person name="Teague B."/>
            <person name="Potamousis K."/>
            <person name="Churas C."/>
            <person name="Place M."/>
            <person name="Herschleb J."/>
            <person name="Runnheim R."/>
            <person name="Forrest D."/>
            <person name="Amos-Landgraf J."/>
            <person name="Schwartz D.C."/>
            <person name="Cheng Z."/>
            <person name="Lindblad-Toh K."/>
            <person name="Eichler E.E."/>
            <person name="Ponting C.P."/>
        </authorList>
    </citation>
    <scope>NUCLEOTIDE SEQUENCE [LARGE SCALE GENOMIC DNA]</scope>
    <source>
        <strain>C57BL/6J</strain>
    </source>
</reference>
<reference key="2">
    <citation type="journal article" date="2004" name="Genome Res.">
        <title>The status, quality, and expansion of the NIH full-length cDNA project: the Mammalian Gene Collection (MGC).</title>
        <authorList>
            <consortium name="The MGC Project Team"/>
        </authorList>
    </citation>
    <scope>NUCLEOTIDE SEQUENCE [LARGE SCALE MRNA]</scope>
    <source>
        <strain>C57BL/6J</strain>
        <tissue>Thymus</tissue>
    </source>
</reference>
<name>STMD1_MOUSE</name>
<keyword id="KW-0449">Lipoprotein</keyword>
<keyword id="KW-0519">Myristate</keyword>
<keyword id="KW-1185">Reference proteome</keyword>